<organism>
    <name type="scientific">Colwellia psychrerythraea (strain 34H / ATCC BAA-681)</name>
    <name type="common">Vibrio psychroerythus</name>
    <dbReference type="NCBI Taxonomy" id="167879"/>
    <lineage>
        <taxon>Bacteria</taxon>
        <taxon>Pseudomonadati</taxon>
        <taxon>Pseudomonadota</taxon>
        <taxon>Gammaproteobacteria</taxon>
        <taxon>Alteromonadales</taxon>
        <taxon>Colwelliaceae</taxon>
        <taxon>Colwellia</taxon>
    </lineage>
</organism>
<protein>
    <recommendedName>
        <fullName evidence="1">Lipoprotein-releasing system ATP-binding protein LolD</fullName>
        <ecNumber evidence="1">7.6.2.-</ecNumber>
    </recommendedName>
</protein>
<sequence length="258" mass="28536">MSKVLQCCQLSKSYIQGDIETKVLNDLELSVDKGELLAVVGSSGCGKSTFLHLAGALDSPSSGKVLINNIDIHQLSDKERAKFRNEHIGFIYQFHHLMMEFNAQENVAMPLMIRGEKPKDALLAAKEMLDQVGLSHRIDYRPSQLSGGERQRVAIARALVTKPSLVLADEPTGNLDSDTAEQIYQLIRSLNKTAQTSFVIVTHDLVLANRMDRQVKLVQGQLRPLSDNSEQALPPTSSITDPANNIKDNEPQANERHV</sequence>
<dbReference type="EC" id="7.6.2.-" evidence="1"/>
<dbReference type="EMBL" id="CP000083">
    <property type="protein sequence ID" value="AAZ26079.1"/>
    <property type="molecule type" value="Genomic_DNA"/>
</dbReference>
<dbReference type="RefSeq" id="WP_011044238.1">
    <property type="nucleotide sequence ID" value="NC_003910.7"/>
</dbReference>
<dbReference type="SMR" id="Q47YG8"/>
<dbReference type="STRING" id="167879.CPS_3478"/>
<dbReference type="KEGG" id="cps:CPS_3478"/>
<dbReference type="HOGENOM" id="CLU_000604_1_22_6"/>
<dbReference type="Proteomes" id="UP000000547">
    <property type="component" value="Chromosome"/>
</dbReference>
<dbReference type="GO" id="GO:0005886">
    <property type="term" value="C:plasma membrane"/>
    <property type="evidence" value="ECO:0007669"/>
    <property type="project" value="UniProtKB-SubCell"/>
</dbReference>
<dbReference type="GO" id="GO:0005524">
    <property type="term" value="F:ATP binding"/>
    <property type="evidence" value="ECO:0007669"/>
    <property type="project" value="UniProtKB-KW"/>
</dbReference>
<dbReference type="GO" id="GO:0016887">
    <property type="term" value="F:ATP hydrolysis activity"/>
    <property type="evidence" value="ECO:0007669"/>
    <property type="project" value="InterPro"/>
</dbReference>
<dbReference type="GO" id="GO:0022857">
    <property type="term" value="F:transmembrane transporter activity"/>
    <property type="evidence" value="ECO:0007669"/>
    <property type="project" value="TreeGrafter"/>
</dbReference>
<dbReference type="GO" id="GO:0044874">
    <property type="term" value="P:lipoprotein localization to outer membrane"/>
    <property type="evidence" value="ECO:0007669"/>
    <property type="project" value="TreeGrafter"/>
</dbReference>
<dbReference type="GO" id="GO:0089705">
    <property type="term" value="P:protein localization to outer membrane"/>
    <property type="evidence" value="ECO:0007669"/>
    <property type="project" value="TreeGrafter"/>
</dbReference>
<dbReference type="CDD" id="cd03255">
    <property type="entry name" value="ABC_MJ0796_LolCDE_FtsE"/>
    <property type="match status" value="1"/>
</dbReference>
<dbReference type="FunFam" id="3.40.50.300:FF:000230">
    <property type="entry name" value="Lipoprotein-releasing system ATP-binding protein LolD"/>
    <property type="match status" value="1"/>
</dbReference>
<dbReference type="Gene3D" id="3.40.50.300">
    <property type="entry name" value="P-loop containing nucleotide triphosphate hydrolases"/>
    <property type="match status" value="1"/>
</dbReference>
<dbReference type="InterPro" id="IPR003593">
    <property type="entry name" value="AAA+_ATPase"/>
</dbReference>
<dbReference type="InterPro" id="IPR003439">
    <property type="entry name" value="ABC_transporter-like_ATP-bd"/>
</dbReference>
<dbReference type="InterPro" id="IPR017871">
    <property type="entry name" value="ABC_transporter-like_CS"/>
</dbReference>
<dbReference type="InterPro" id="IPR015854">
    <property type="entry name" value="ABC_transpr_LolD-like"/>
</dbReference>
<dbReference type="InterPro" id="IPR011924">
    <property type="entry name" value="LolD_lipo_ATP-bd"/>
</dbReference>
<dbReference type="InterPro" id="IPR017911">
    <property type="entry name" value="MacB-like_ATP-bd"/>
</dbReference>
<dbReference type="InterPro" id="IPR027417">
    <property type="entry name" value="P-loop_NTPase"/>
</dbReference>
<dbReference type="NCBIfam" id="TIGR02211">
    <property type="entry name" value="LolD_lipo_ex"/>
    <property type="match status" value="1"/>
</dbReference>
<dbReference type="PANTHER" id="PTHR24220">
    <property type="entry name" value="IMPORT ATP-BINDING PROTEIN"/>
    <property type="match status" value="1"/>
</dbReference>
<dbReference type="PANTHER" id="PTHR24220:SF689">
    <property type="entry name" value="LIPOPROTEIN-RELEASING SYSTEM ATP-BINDING PROTEIN LOLD"/>
    <property type="match status" value="1"/>
</dbReference>
<dbReference type="Pfam" id="PF00005">
    <property type="entry name" value="ABC_tran"/>
    <property type="match status" value="1"/>
</dbReference>
<dbReference type="SMART" id="SM00382">
    <property type="entry name" value="AAA"/>
    <property type="match status" value="1"/>
</dbReference>
<dbReference type="SUPFAM" id="SSF52540">
    <property type="entry name" value="P-loop containing nucleoside triphosphate hydrolases"/>
    <property type="match status" value="1"/>
</dbReference>
<dbReference type="PROSITE" id="PS00211">
    <property type="entry name" value="ABC_TRANSPORTER_1"/>
    <property type="match status" value="1"/>
</dbReference>
<dbReference type="PROSITE" id="PS50893">
    <property type="entry name" value="ABC_TRANSPORTER_2"/>
    <property type="match status" value="1"/>
</dbReference>
<dbReference type="PROSITE" id="PS51244">
    <property type="entry name" value="LOLD"/>
    <property type="match status" value="1"/>
</dbReference>
<evidence type="ECO:0000255" key="1">
    <source>
        <dbReference type="HAMAP-Rule" id="MF_01708"/>
    </source>
</evidence>
<evidence type="ECO:0000256" key="2">
    <source>
        <dbReference type="SAM" id="MobiDB-lite"/>
    </source>
</evidence>
<accession>Q47YG8</accession>
<name>LOLD_COLP3</name>
<reference key="1">
    <citation type="journal article" date="2005" name="Proc. Natl. Acad. Sci. U.S.A.">
        <title>The psychrophilic lifestyle as revealed by the genome sequence of Colwellia psychrerythraea 34H through genomic and proteomic analyses.</title>
        <authorList>
            <person name="Methe B.A."/>
            <person name="Nelson K.E."/>
            <person name="Deming J.W."/>
            <person name="Momen B."/>
            <person name="Melamud E."/>
            <person name="Zhang X."/>
            <person name="Moult J."/>
            <person name="Madupu R."/>
            <person name="Nelson W.C."/>
            <person name="Dodson R.J."/>
            <person name="Brinkac L.M."/>
            <person name="Daugherty S.C."/>
            <person name="Durkin A.S."/>
            <person name="DeBoy R.T."/>
            <person name="Kolonay J.F."/>
            <person name="Sullivan S.A."/>
            <person name="Zhou L."/>
            <person name="Davidsen T.M."/>
            <person name="Wu M."/>
            <person name="Huston A.L."/>
            <person name="Lewis M."/>
            <person name="Weaver B."/>
            <person name="Weidman J.F."/>
            <person name="Khouri H."/>
            <person name="Utterback T.R."/>
            <person name="Feldblyum T.V."/>
            <person name="Fraser C.M."/>
        </authorList>
    </citation>
    <scope>NUCLEOTIDE SEQUENCE [LARGE SCALE GENOMIC DNA]</scope>
    <source>
        <strain>34H / ATCC BAA-681</strain>
    </source>
</reference>
<comment type="function">
    <text evidence="1">Part of the ABC transporter complex LolCDE involved in the translocation of mature outer membrane-directed lipoproteins, from the inner membrane to the periplasmic chaperone, LolA. Responsible for the formation of the LolA-lipoprotein complex in an ATP-dependent manner.</text>
</comment>
<comment type="subunit">
    <text evidence="1">The complex is composed of two ATP-binding proteins (LolD) and two transmembrane proteins (LolC and LolE).</text>
</comment>
<comment type="subcellular location">
    <subcellularLocation>
        <location evidence="1">Cell inner membrane</location>
        <topology evidence="1">Peripheral membrane protein</topology>
    </subcellularLocation>
</comment>
<comment type="similarity">
    <text evidence="1">Belongs to the ABC transporter superfamily. Lipoprotein translocase (TC 3.A.1.125) family.</text>
</comment>
<keyword id="KW-0067">ATP-binding</keyword>
<keyword id="KW-0997">Cell inner membrane</keyword>
<keyword id="KW-1003">Cell membrane</keyword>
<keyword id="KW-0472">Membrane</keyword>
<keyword id="KW-0547">Nucleotide-binding</keyword>
<keyword id="KW-1278">Translocase</keyword>
<keyword id="KW-0813">Transport</keyword>
<gene>
    <name evidence="1" type="primary">lolD</name>
    <name type="ordered locus">CPS_3478</name>
</gene>
<proteinExistence type="inferred from homology"/>
<feature type="chain" id="PRO_0000272072" description="Lipoprotein-releasing system ATP-binding protein LolD">
    <location>
        <begin position="1"/>
        <end position="258"/>
    </location>
</feature>
<feature type="domain" description="ABC transporter" evidence="1">
    <location>
        <begin position="5"/>
        <end position="244"/>
    </location>
</feature>
<feature type="region of interest" description="Disordered" evidence="2">
    <location>
        <begin position="222"/>
        <end position="258"/>
    </location>
</feature>
<feature type="compositionally biased region" description="Polar residues" evidence="2">
    <location>
        <begin position="226"/>
        <end position="243"/>
    </location>
</feature>
<feature type="compositionally biased region" description="Basic and acidic residues" evidence="2">
    <location>
        <begin position="247"/>
        <end position="258"/>
    </location>
</feature>
<feature type="binding site" evidence="1">
    <location>
        <begin position="41"/>
        <end position="48"/>
    </location>
    <ligand>
        <name>ATP</name>
        <dbReference type="ChEBI" id="CHEBI:30616"/>
    </ligand>
</feature>